<evidence type="ECO:0000250" key="1">
    <source>
        <dbReference type="UniProtKB" id="O64411"/>
    </source>
</evidence>
<evidence type="ECO:0000255" key="2"/>
<evidence type="ECO:0000269" key="3">
    <source>
    </source>
</evidence>
<evidence type="ECO:0000303" key="4">
    <source>
    </source>
</evidence>
<evidence type="ECO:0000305" key="5"/>
<evidence type="ECO:0000305" key="6">
    <source>
    </source>
</evidence>
<evidence type="ECO:0000312" key="7">
    <source>
        <dbReference type="EMBL" id="BAF16132.1"/>
    </source>
</evidence>
<evidence type="ECO:0000312" key="8">
    <source>
        <dbReference type="EMBL" id="CAE02834.1"/>
    </source>
</evidence>
<evidence type="ECO:0000312" key="9">
    <source>
        <dbReference type="EMBL" id="EAZ32367.1"/>
    </source>
</evidence>
<keyword id="KW-0274">FAD</keyword>
<keyword id="KW-0285">Flavoprotein</keyword>
<keyword id="KW-0560">Oxidoreductase</keyword>
<keyword id="KW-0576">Peroxisome</keyword>
<keyword id="KW-1185">Reference proteome</keyword>
<gene>
    <name evidence="4" type="primary">PAO4</name>
    <name evidence="7" type="ordered locus">Os04g0671200</name>
    <name evidence="5" type="ordered locus">LOC_Os04g57550</name>
    <name evidence="9" type="ORF">OsJ_16578</name>
    <name evidence="8" type="ORF">OSJNBa0043A12.39</name>
</gene>
<organism>
    <name type="scientific">Oryza sativa subsp. japonica</name>
    <name type="common">Rice</name>
    <dbReference type="NCBI Taxonomy" id="39947"/>
    <lineage>
        <taxon>Eukaryota</taxon>
        <taxon>Viridiplantae</taxon>
        <taxon>Streptophyta</taxon>
        <taxon>Embryophyta</taxon>
        <taxon>Tracheophyta</taxon>
        <taxon>Spermatophyta</taxon>
        <taxon>Magnoliopsida</taxon>
        <taxon>Liliopsida</taxon>
        <taxon>Poales</taxon>
        <taxon>Poaceae</taxon>
        <taxon>BOP clade</taxon>
        <taxon>Oryzoideae</taxon>
        <taxon>Oryzeae</taxon>
        <taxon>Oryzinae</taxon>
        <taxon>Oryza</taxon>
        <taxon>Oryza sativa</taxon>
    </lineage>
</organism>
<name>PAO4_ORYSJ</name>
<protein>
    <recommendedName>
        <fullName evidence="4">Polyamine oxidase 4</fullName>
        <shortName evidence="4">OsPAO4</shortName>
        <ecNumber evidence="3">1.5.3.-</ecNumber>
    </recommendedName>
</protein>
<comment type="function">
    <text evidence="3 6">Flavoenzyme involved in polyamine back-conversion (PubMed:21796433). Catalyzes the oxidation of the secondary amino group of polyamines, such as spermine (PubMed:21796433). Substrate preference is spermine &gt; thermospermine &gt; norspermine (PubMed:21796433). No activity detected when putrescine, spermidine or N(1)-acetylspermidine are used as substrates (PubMed:21796433). Plays an important role in the regulation of polyamine intracellular concentration (Probable).</text>
</comment>
<comment type="catalytic activity">
    <reaction evidence="3">
        <text>spermine + O2 + H2O = 3-aminopropanal + spermidine + H2O2</text>
        <dbReference type="Rhea" id="RHEA:25804"/>
        <dbReference type="ChEBI" id="CHEBI:15377"/>
        <dbReference type="ChEBI" id="CHEBI:15379"/>
        <dbReference type="ChEBI" id="CHEBI:16240"/>
        <dbReference type="ChEBI" id="CHEBI:45725"/>
        <dbReference type="ChEBI" id="CHEBI:57834"/>
        <dbReference type="ChEBI" id="CHEBI:58374"/>
    </reaction>
</comment>
<comment type="catalytic activity">
    <reaction evidence="3">
        <text>norspermine + O2 + H2O = norspermidine + 3-aminopropanal + H2O2</text>
        <dbReference type="Rhea" id="RHEA:25816"/>
        <dbReference type="ChEBI" id="CHEBI:15377"/>
        <dbReference type="ChEBI" id="CHEBI:15379"/>
        <dbReference type="ChEBI" id="CHEBI:16240"/>
        <dbReference type="ChEBI" id="CHEBI:57920"/>
        <dbReference type="ChEBI" id="CHEBI:58374"/>
        <dbReference type="ChEBI" id="CHEBI:58704"/>
    </reaction>
</comment>
<comment type="catalytic activity">
    <reaction evidence="3">
        <text>thermospermine + O2 + H2O = 3-aminopropanal + spermidine + H2O2</text>
        <dbReference type="Rhea" id="RHEA:57836"/>
        <dbReference type="ChEBI" id="CHEBI:15377"/>
        <dbReference type="ChEBI" id="CHEBI:15379"/>
        <dbReference type="ChEBI" id="CHEBI:16240"/>
        <dbReference type="ChEBI" id="CHEBI:57834"/>
        <dbReference type="ChEBI" id="CHEBI:58374"/>
        <dbReference type="ChEBI" id="CHEBI:59903"/>
    </reaction>
</comment>
<comment type="cofactor">
    <cofactor evidence="3">
        <name>FAD</name>
        <dbReference type="ChEBI" id="CHEBI:57692"/>
    </cofactor>
    <text evidence="6">Binds 1 FAD per subunit.</text>
</comment>
<comment type="pathway">
    <text evidence="5">Amine and polyamine degradation; spermine degradation.</text>
</comment>
<comment type="subcellular location">
    <subcellularLocation>
        <location evidence="3">Peroxisome</location>
    </subcellularLocation>
</comment>
<comment type="tissue specificity">
    <text evidence="3">Widely expressed.</text>
</comment>
<comment type="similarity">
    <text evidence="5">Belongs to the flavin monoamine oxidase family.</text>
</comment>
<accession>Q7XR46</accession>
<dbReference type="EC" id="1.5.3.-" evidence="3"/>
<dbReference type="EMBL" id="AL606619">
    <property type="protein sequence ID" value="CAE02834.1"/>
    <property type="molecule type" value="Genomic_DNA"/>
</dbReference>
<dbReference type="EMBL" id="AP008210">
    <property type="protein sequence ID" value="BAF16132.1"/>
    <property type="molecule type" value="Genomic_DNA"/>
</dbReference>
<dbReference type="EMBL" id="AP014960">
    <property type="protein sequence ID" value="BAS91564.1"/>
    <property type="molecule type" value="Genomic_DNA"/>
</dbReference>
<dbReference type="EMBL" id="CM000141">
    <property type="protein sequence ID" value="EAZ32367.1"/>
    <property type="molecule type" value="Genomic_DNA"/>
</dbReference>
<dbReference type="RefSeq" id="XP_015637015.1">
    <property type="nucleotide sequence ID" value="XM_015781529.1"/>
</dbReference>
<dbReference type="SMR" id="Q7XR46"/>
<dbReference type="FunCoup" id="Q7XR46">
    <property type="interactions" value="21"/>
</dbReference>
<dbReference type="STRING" id="39947.Q7XR46"/>
<dbReference type="PaxDb" id="39947-Q7XR46"/>
<dbReference type="EnsemblPlants" id="Os04t0671200-01">
    <property type="protein sequence ID" value="Os04t0671200-01"/>
    <property type="gene ID" value="Os04g0671200"/>
</dbReference>
<dbReference type="Gramene" id="Os04t0671200-01">
    <property type="protein sequence ID" value="Os04t0671200-01"/>
    <property type="gene ID" value="Os04g0671200"/>
</dbReference>
<dbReference type="KEGG" id="dosa:Os04g0671200"/>
<dbReference type="eggNOG" id="KOG0029">
    <property type="taxonomic scope" value="Eukaryota"/>
</dbReference>
<dbReference type="HOGENOM" id="CLU_004498_10_0_1"/>
<dbReference type="InParanoid" id="Q7XR46"/>
<dbReference type="OMA" id="HITSCPV"/>
<dbReference type="OrthoDB" id="5046242at2759"/>
<dbReference type="UniPathway" id="UPA00211"/>
<dbReference type="Proteomes" id="UP000000763">
    <property type="component" value="Chromosome 4"/>
</dbReference>
<dbReference type="Proteomes" id="UP000007752">
    <property type="component" value="Chromosome 4"/>
</dbReference>
<dbReference type="Proteomes" id="UP000059680">
    <property type="component" value="Chromosome 4"/>
</dbReference>
<dbReference type="ExpressionAtlas" id="Q7XR46">
    <property type="expression patterns" value="baseline and differential"/>
</dbReference>
<dbReference type="GO" id="GO:0005777">
    <property type="term" value="C:peroxisome"/>
    <property type="evidence" value="ECO:0000314"/>
    <property type="project" value="UniProtKB"/>
</dbReference>
<dbReference type="GO" id="GO:0050660">
    <property type="term" value="F:flavin adenine dinucleotide binding"/>
    <property type="evidence" value="ECO:0000314"/>
    <property type="project" value="UniProtKB"/>
</dbReference>
<dbReference type="GO" id="GO:0052901">
    <property type="term" value="F:spermine oxidase activity"/>
    <property type="evidence" value="ECO:0000314"/>
    <property type="project" value="UniProtKB"/>
</dbReference>
<dbReference type="GO" id="GO:1990534">
    <property type="term" value="F:thermospermine oxidase activity"/>
    <property type="evidence" value="ECO:0007669"/>
    <property type="project" value="RHEA"/>
</dbReference>
<dbReference type="GO" id="GO:0046208">
    <property type="term" value="P:spermine catabolic process"/>
    <property type="evidence" value="ECO:0000314"/>
    <property type="project" value="UniProtKB"/>
</dbReference>
<dbReference type="GO" id="GO:1903602">
    <property type="term" value="P:thermospermine catabolic process"/>
    <property type="evidence" value="ECO:0000314"/>
    <property type="project" value="UniProtKB"/>
</dbReference>
<dbReference type="Gene3D" id="3.90.660.10">
    <property type="match status" value="1"/>
</dbReference>
<dbReference type="Gene3D" id="3.50.50.60">
    <property type="entry name" value="FAD/NAD(P)-binding domain"/>
    <property type="match status" value="1"/>
</dbReference>
<dbReference type="InterPro" id="IPR002937">
    <property type="entry name" value="Amino_oxidase"/>
</dbReference>
<dbReference type="InterPro" id="IPR036188">
    <property type="entry name" value="FAD/NAD-bd_sf"/>
</dbReference>
<dbReference type="InterPro" id="IPR001613">
    <property type="entry name" value="Flavin_amine_oxidase"/>
</dbReference>
<dbReference type="InterPro" id="IPR050281">
    <property type="entry name" value="Flavin_monoamine_oxidase"/>
</dbReference>
<dbReference type="PANTHER" id="PTHR10742">
    <property type="entry name" value="FLAVIN MONOAMINE OXIDASE"/>
    <property type="match status" value="1"/>
</dbReference>
<dbReference type="PANTHER" id="PTHR10742:SF264">
    <property type="entry name" value="POLYAMINE OXIDASE 4"/>
    <property type="match status" value="1"/>
</dbReference>
<dbReference type="Pfam" id="PF01593">
    <property type="entry name" value="Amino_oxidase"/>
    <property type="match status" value="1"/>
</dbReference>
<dbReference type="PRINTS" id="PR00757">
    <property type="entry name" value="AMINEOXDASEF"/>
</dbReference>
<dbReference type="SUPFAM" id="SSF54373">
    <property type="entry name" value="FAD-linked reductases, C-terminal domain"/>
    <property type="match status" value="1"/>
</dbReference>
<dbReference type="SUPFAM" id="SSF51905">
    <property type="entry name" value="FAD/NAD(P)-binding domain"/>
    <property type="match status" value="1"/>
</dbReference>
<sequence length="487" mass="52913">MDPNSLKTGGLLLPTIERQCASPPSVIVIGGGISGVAAARALSNASFEVTVLESRDRVGGRVHTDYSFGCPIDMGASWLHGVCNENSLAPLIGYLGLKLYRTSGDNSVLYDHDLESYALFDKAGHQVSKETVAKVEETFERILDETVKVRDEQEHDMPLLQAISLVLERHPHLKLQGIDDQVLQWCVCRLEAWFAADADEISLKNWDQEHVLTGGHGLMVNGYYPIIQALAQGLDIRLNQRVTKIARQFNGVTVTTEDGTSYSADACIITVPLGVLKANIIKFEPELPSWKSSAIADLGVGIENKIAMHFDTVFWPNVEVLGMVGPTPKACGYFLNLHKATGNPVLVYMAAGRFAQEVEKLSDKEAVDLVMSHLKKMLPDATEPTKYLVSRWGSDPNSLGSYSCDLVGKPADVSARFAAPVENLYFAGEAASADHSGSVHGAYSSGIAAADECRKRILMQKGIPDLVQVKAYEEMAGVIAPLQICRT</sequence>
<reference key="1">
    <citation type="journal article" date="2002" name="Nature">
        <title>Sequence and analysis of rice chromosome 4.</title>
        <authorList>
            <person name="Feng Q."/>
            <person name="Zhang Y."/>
            <person name="Hao P."/>
            <person name="Wang S."/>
            <person name="Fu G."/>
            <person name="Huang Y."/>
            <person name="Li Y."/>
            <person name="Zhu J."/>
            <person name="Liu Y."/>
            <person name="Hu X."/>
            <person name="Jia P."/>
            <person name="Zhang Y."/>
            <person name="Zhao Q."/>
            <person name="Ying K."/>
            <person name="Yu S."/>
            <person name="Tang Y."/>
            <person name="Weng Q."/>
            <person name="Zhang L."/>
            <person name="Lu Y."/>
            <person name="Mu J."/>
            <person name="Lu Y."/>
            <person name="Zhang L.S."/>
            <person name="Yu Z."/>
            <person name="Fan D."/>
            <person name="Liu X."/>
            <person name="Lu T."/>
            <person name="Li C."/>
            <person name="Wu Y."/>
            <person name="Sun T."/>
            <person name="Lei H."/>
            <person name="Li T."/>
            <person name="Hu H."/>
            <person name="Guan J."/>
            <person name="Wu M."/>
            <person name="Zhang R."/>
            <person name="Zhou B."/>
            <person name="Chen Z."/>
            <person name="Chen L."/>
            <person name="Jin Z."/>
            <person name="Wang R."/>
            <person name="Yin H."/>
            <person name="Cai Z."/>
            <person name="Ren S."/>
            <person name="Lv G."/>
            <person name="Gu W."/>
            <person name="Zhu G."/>
            <person name="Tu Y."/>
            <person name="Jia J."/>
            <person name="Zhang Y."/>
            <person name="Chen J."/>
            <person name="Kang H."/>
            <person name="Chen X."/>
            <person name="Shao C."/>
            <person name="Sun Y."/>
            <person name="Hu Q."/>
            <person name="Zhang X."/>
            <person name="Zhang W."/>
            <person name="Wang L."/>
            <person name="Ding C."/>
            <person name="Sheng H."/>
            <person name="Gu J."/>
            <person name="Chen S."/>
            <person name="Ni L."/>
            <person name="Zhu F."/>
            <person name="Chen W."/>
            <person name="Lan L."/>
            <person name="Lai Y."/>
            <person name="Cheng Z."/>
            <person name="Gu M."/>
            <person name="Jiang J."/>
            <person name="Li J."/>
            <person name="Hong G."/>
            <person name="Xue Y."/>
            <person name="Han B."/>
        </authorList>
    </citation>
    <scope>NUCLEOTIDE SEQUENCE [LARGE SCALE GENOMIC DNA]</scope>
    <source>
        <strain>cv. Nipponbare</strain>
    </source>
</reference>
<reference key="2">
    <citation type="journal article" date="2005" name="Nature">
        <title>The map-based sequence of the rice genome.</title>
        <authorList>
            <consortium name="International rice genome sequencing project (IRGSP)"/>
        </authorList>
    </citation>
    <scope>NUCLEOTIDE SEQUENCE [LARGE SCALE GENOMIC DNA]</scope>
    <source>
        <strain>cv. Nipponbare</strain>
    </source>
</reference>
<reference key="3">
    <citation type="journal article" date="2008" name="Nucleic Acids Res.">
        <title>The rice annotation project database (RAP-DB): 2008 update.</title>
        <authorList>
            <consortium name="The rice annotation project (RAP)"/>
        </authorList>
    </citation>
    <scope>GENOME REANNOTATION</scope>
    <source>
        <strain>cv. Nipponbare</strain>
    </source>
</reference>
<reference key="4">
    <citation type="journal article" date="2013" name="Rice">
        <title>Improvement of the Oryza sativa Nipponbare reference genome using next generation sequence and optical map data.</title>
        <authorList>
            <person name="Kawahara Y."/>
            <person name="de la Bastide M."/>
            <person name="Hamilton J.P."/>
            <person name="Kanamori H."/>
            <person name="McCombie W.R."/>
            <person name="Ouyang S."/>
            <person name="Schwartz D.C."/>
            <person name="Tanaka T."/>
            <person name="Wu J."/>
            <person name="Zhou S."/>
            <person name="Childs K.L."/>
            <person name="Davidson R.M."/>
            <person name="Lin H."/>
            <person name="Quesada-Ocampo L."/>
            <person name="Vaillancourt B."/>
            <person name="Sakai H."/>
            <person name="Lee S.S."/>
            <person name="Kim J."/>
            <person name="Numa H."/>
            <person name="Itoh T."/>
            <person name="Buell C.R."/>
            <person name="Matsumoto T."/>
        </authorList>
    </citation>
    <scope>GENOME REANNOTATION</scope>
    <source>
        <strain>cv. Nipponbare</strain>
    </source>
</reference>
<reference key="5">
    <citation type="journal article" date="2005" name="PLoS Biol.">
        <title>The genomes of Oryza sativa: a history of duplications.</title>
        <authorList>
            <person name="Yu J."/>
            <person name="Wang J."/>
            <person name="Lin W."/>
            <person name="Li S."/>
            <person name="Li H."/>
            <person name="Zhou J."/>
            <person name="Ni P."/>
            <person name="Dong W."/>
            <person name="Hu S."/>
            <person name="Zeng C."/>
            <person name="Zhang J."/>
            <person name="Zhang Y."/>
            <person name="Li R."/>
            <person name="Xu Z."/>
            <person name="Li S."/>
            <person name="Li X."/>
            <person name="Zheng H."/>
            <person name="Cong L."/>
            <person name="Lin L."/>
            <person name="Yin J."/>
            <person name="Geng J."/>
            <person name="Li G."/>
            <person name="Shi J."/>
            <person name="Liu J."/>
            <person name="Lv H."/>
            <person name="Li J."/>
            <person name="Wang J."/>
            <person name="Deng Y."/>
            <person name="Ran L."/>
            <person name="Shi X."/>
            <person name="Wang X."/>
            <person name="Wu Q."/>
            <person name="Li C."/>
            <person name="Ren X."/>
            <person name="Wang J."/>
            <person name="Wang X."/>
            <person name="Li D."/>
            <person name="Liu D."/>
            <person name="Zhang X."/>
            <person name="Ji Z."/>
            <person name="Zhao W."/>
            <person name="Sun Y."/>
            <person name="Zhang Z."/>
            <person name="Bao J."/>
            <person name="Han Y."/>
            <person name="Dong L."/>
            <person name="Ji J."/>
            <person name="Chen P."/>
            <person name="Wu S."/>
            <person name="Liu J."/>
            <person name="Xiao Y."/>
            <person name="Bu D."/>
            <person name="Tan J."/>
            <person name="Yang L."/>
            <person name="Ye C."/>
            <person name="Zhang J."/>
            <person name="Xu J."/>
            <person name="Zhou Y."/>
            <person name="Yu Y."/>
            <person name="Zhang B."/>
            <person name="Zhuang S."/>
            <person name="Wei H."/>
            <person name="Liu B."/>
            <person name="Lei M."/>
            <person name="Yu H."/>
            <person name="Li Y."/>
            <person name="Xu H."/>
            <person name="Wei S."/>
            <person name="He X."/>
            <person name="Fang L."/>
            <person name="Zhang Z."/>
            <person name="Zhang Y."/>
            <person name="Huang X."/>
            <person name="Su Z."/>
            <person name="Tong W."/>
            <person name="Li J."/>
            <person name="Tong Z."/>
            <person name="Li S."/>
            <person name="Ye J."/>
            <person name="Wang L."/>
            <person name="Fang L."/>
            <person name="Lei T."/>
            <person name="Chen C.-S."/>
            <person name="Chen H.-C."/>
            <person name="Xu Z."/>
            <person name="Li H."/>
            <person name="Huang H."/>
            <person name="Zhang F."/>
            <person name="Xu H."/>
            <person name="Li N."/>
            <person name="Zhao C."/>
            <person name="Li S."/>
            <person name="Dong L."/>
            <person name="Huang Y."/>
            <person name="Li L."/>
            <person name="Xi Y."/>
            <person name="Qi Q."/>
            <person name="Li W."/>
            <person name="Zhang B."/>
            <person name="Hu W."/>
            <person name="Zhang Y."/>
            <person name="Tian X."/>
            <person name="Jiao Y."/>
            <person name="Liang X."/>
            <person name="Jin J."/>
            <person name="Gao L."/>
            <person name="Zheng W."/>
            <person name="Hao B."/>
            <person name="Liu S.-M."/>
            <person name="Wang W."/>
            <person name="Yuan L."/>
            <person name="Cao M."/>
            <person name="McDermott J."/>
            <person name="Samudrala R."/>
            <person name="Wang J."/>
            <person name="Wong G.K.-S."/>
            <person name="Yang H."/>
        </authorList>
    </citation>
    <scope>NUCLEOTIDE SEQUENCE [LARGE SCALE GENOMIC DNA]</scope>
    <source>
        <strain>cv. Nipponbare</strain>
    </source>
</reference>
<reference key="6">
    <citation type="journal article" date="2012" name="Amino Acids">
        <title>Constitutively and highly expressed Oryza sativa polyamine oxidases localize in peroxisomes and catalyze polyamine back conversion.</title>
        <authorList>
            <person name="Ono Y."/>
            <person name="Kim D.W."/>
            <person name="Watanabe K."/>
            <person name="Sasaki A."/>
            <person name="Niitsu M."/>
            <person name="Berberich T."/>
            <person name="Kusano T."/>
            <person name="Takahashi Y."/>
        </authorList>
    </citation>
    <scope>FUNCTION</scope>
    <scope>CATALYTIC ACTIVITY</scope>
    <scope>COFACTOR</scope>
    <scope>SUBCELLULAR LOCATION</scope>
    <scope>TISSUE SPECIFICITY</scope>
</reference>
<proteinExistence type="evidence at protein level"/>
<feature type="chain" id="PRO_0000445723" description="Polyamine oxidase 4">
    <location>
        <begin position="1"/>
        <end position="487"/>
    </location>
</feature>
<feature type="short sequence motif" description="Microbody targeting signal" evidence="2">
    <location>
        <begin position="485"/>
        <end position="487"/>
    </location>
</feature>
<feature type="binding site" evidence="1">
    <location>
        <position position="53"/>
    </location>
    <ligand>
        <name>FAD</name>
        <dbReference type="ChEBI" id="CHEBI:57692"/>
    </ligand>
</feature>
<feature type="binding site" evidence="1">
    <location>
        <position position="61"/>
    </location>
    <ligand>
        <name>FAD</name>
        <dbReference type="ChEBI" id="CHEBI:57692"/>
    </ligand>
</feature>
<feature type="binding site" evidence="1">
    <location>
        <position position="242"/>
    </location>
    <ligand>
        <name>FAD</name>
        <dbReference type="ChEBI" id="CHEBI:57692"/>
    </ligand>
</feature>
<feature type="binding site" evidence="1">
    <location>
        <position position="429"/>
    </location>
    <ligand>
        <name>FAD</name>
        <dbReference type="ChEBI" id="CHEBI:57692"/>
    </ligand>
</feature>